<protein>
    <recommendedName>
        <fullName evidence="2">Diphosphomevalonate decarboxylase</fullName>
        <ecNumber evidence="2">4.1.1.33</ecNumber>
    </recommendedName>
    <alternativeName>
        <fullName evidence="2">Mevalonate pyrophosphate decarboxylase</fullName>
    </alternativeName>
    <alternativeName>
        <fullName evidence="2">Mevalonate-5-diphosphate decarboxylase</fullName>
        <shortName evidence="2">MDDase</shortName>
    </alternativeName>
</protein>
<sequence length="393" mass="42755">MDKKVYQCTVSAPVNIAVIKYWGKRDVALNLPTNSSISVTLSQDDLRTVTTASCSEKFENDTLWLNGNAEEIFANKRLRVCVEELRKARLDLEEENDDLDKIGALKLHVVSENNFPTAAGLASSAAGYAAFCEAIARLYDLPWTPTQLSRIARQGSGSACRSLFGGYVAWEMGELHSGADSVAVQVEPVENWPEIRVAVLVASAAKKGVSSTAGMQATVASSTLFQHRIQNIVPQRIQEMKTAIRERDFETFAKLTMTDSNQFHACCLDTFPPIFYLNDTSRAVIRVVENINATAGKTIAAYTFDAGPNAVIYFLEENSEIVLNTLYAVTKNAEGWSKQYGSSPVTVDSAAANIVSSGISRVILTRVGNGPRVLTIDESLIDASGNPKFIGSH</sequence>
<accession>O13963</accession>
<gene>
    <name type="primary">mvd1</name>
    <name type="ORF">SPAC24C9.03</name>
</gene>
<proteinExistence type="inferred from homology"/>
<reference key="1">
    <citation type="journal article" date="2002" name="Nature">
        <title>The genome sequence of Schizosaccharomyces pombe.</title>
        <authorList>
            <person name="Wood V."/>
            <person name="Gwilliam R."/>
            <person name="Rajandream M.A."/>
            <person name="Lyne M.H."/>
            <person name="Lyne R."/>
            <person name="Stewart A."/>
            <person name="Sgouros J.G."/>
            <person name="Peat N."/>
            <person name="Hayles J."/>
            <person name="Baker S.G."/>
            <person name="Basham D."/>
            <person name="Bowman S."/>
            <person name="Brooks K."/>
            <person name="Brown D."/>
            <person name="Brown S."/>
            <person name="Chillingworth T."/>
            <person name="Churcher C.M."/>
            <person name="Collins M."/>
            <person name="Connor R."/>
            <person name="Cronin A."/>
            <person name="Davis P."/>
            <person name="Feltwell T."/>
            <person name="Fraser A."/>
            <person name="Gentles S."/>
            <person name="Goble A."/>
            <person name="Hamlin N."/>
            <person name="Harris D.E."/>
            <person name="Hidalgo J."/>
            <person name="Hodgson G."/>
            <person name="Holroyd S."/>
            <person name="Hornsby T."/>
            <person name="Howarth S."/>
            <person name="Huckle E.J."/>
            <person name="Hunt S."/>
            <person name="Jagels K."/>
            <person name="James K.D."/>
            <person name="Jones L."/>
            <person name="Jones M."/>
            <person name="Leather S."/>
            <person name="McDonald S."/>
            <person name="McLean J."/>
            <person name="Mooney P."/>
            <person name="Moule S."/>
            <person name="Mungall K.L."/>
            <person name="Murphy L.D."/>
            <person name="Niblett D."/>
            <person name="Odell C."/>
            <person name="Oliver K."/>
            <person name="O'Neil S."/>
            <person name="Pearson D."/>
            <person name="Quail M.A."/>
            <person name="Rabbinowitsch E."/>
            <person name="Rutherford K.M."/>
            <person name="Rutter S."/>
            <person name="Saunders D."/>
            <person name="Seeger K."/>
            <person name="Sharp S."/>
            <person name="Skelton J."/>
            <person name="Simmonds M.N."/>
            <person name="Squares R."/>
            <person name="Squares S."/>
            <person name="Stevens K."/>
            <person name="Taylor K."/>
            <person name="Taylor R.G."/>
            <person name="Tivey A."/>
            <person name="Walsh S.V."/>
            <person name="Warren T."/>
            <person name="Whitehead S."/>
            <person name="Woodward J.R."/>
            <person name="Volckaert G."/>
            <person name="Aert R."/>
            <person name="Robben J."/>
            <person name="Grymonprez B."/>
            <person name="Weltjens I."/>
            <person name="Vanstreels E."/>
            <person name="Rieger M."/>
            <person name="Schaefer M."/>
            <person name="Mueller-Auer S."/>
            <person name="Gabel C."/>
            <person name="Fuchs M."/>
            <person name="Duesterhoeft A."/>
            <person name="Fritzc C."/>
            <person name="Holzer E."/>
            <person name="Moestl D."/>
            <person name="Hilbert H."/>
            <person name="Borzym K."/>
            <person name="Langer I."/>
            <person name="Beck A."/>
            <person name="Lehrach H."/>
            <person name="Reinhardt R."/>
            <person name="Pohl T.M."/>
            <person name="Eger P."/>
            <person name="Zimmermann W."/>
            <person name="Wedler H."/>
            <person name="Wambutt R."/>
            <person name="Purnelle B."/>
            <person name="Goffeau A."/>
            <person name="Cadieu E."/>
            <person name="Dreano S."/>
            <person name="Gloux S."/>
            <person name="Lelaure V."/>
            <person name="Mottier S."/>
            <person name="Galibert F."/>
            <person name="Aves S.J."/>
            <person name="Xiang Z."/>
            <person name="Hunt C."/>
            <person name="Moore K."/>
            <person name="Hurst S.M."/>
            <person name="Lucas M."/>
            <person name="Rochet M."/>
            <person name="Gaillardin C."/>
            <person name="Tallada V.A."/>
            <person name="Garzon A."/>
            <person name="Thode G."/>
            <person name="Daga R.R."/>
            <person name="Cruzado L."/>
            <person name="Jimenez J."/>
            <person name="Sanchez M."/>
            <person name="del Rey F."/>
            <person name="Benito J."/>
            <person name="Dominguez A."/>
            <person name="Revuelta J.L."/>
            <person name="Moreno S."/>
            <person name="Armstrong J."/>
            <person name="Forsburg S.L."/>
            <person name="Cerutti L."/>
            <person name="Lowe T."/>
            <person name="McCombie W.R."/>
            <person name="Paulsen I."/>
            <person name="Potashkin J."/>
            <person name="Shpakovski G.V."/>
            <person name="Ussery D."/>
            <person name="Barrell B.G."/>
            <person name="Nurse P."/>
        </authorList>
    </citation>
    <scope>NUCLEOTIDE SEQUENCE [LARGE SCALE GENOMIC DNA]</scope>
    <source>
        <strain>972 / ATCC 24843</strain>
    </source>
</reference>
<reference key="2">
    <citation type="journal article" date="2006" name="Nat. Biotechnol.">
        <title>ORFeome cloning and global analysis of protein localization in the fission yeast Schizosaccharomyces pombe.</title>
        <authorList>
            <person name="Matsuyama A."/>
            <person name="Arai R."/>
            <person name="Yashiroda Y."/>
            <person name="Shirai A."/>
            <person name="Kamata A."/>
            <person name="Sekido S."/>
            <person name="Kobayashi Y."/>
            <person name="Hashimoto A."/>
            <person name="Hamamoto M."/>
            <person name="Hiraoka Y."/>
            <person name="Horinouchi S."/>
            <person name="Yoshida M."/>
        </authorList>
    </citation>
    <scope>SUBCELLULAR LOCATION [LARGE SCALE ANALYSIS]</scope>
</reference>
<feature type="chain" id="PRO_0000310441" description="Diphosphomevalonate decarboxylase">
    <location>
        <begin position="1"/>
        <end position="393"/>
    </location>
</feature>
<feature type="binding site" evidence="1">
    <location>
        <begin position="21"/>
        <end position="24"/>
    </location>
    <ligand>
        <name>(R)-5-diphosphomevalonate</name>
        <dbReference type="ChEBI" id="CHEBI:57557"/>
    </ligand>
</feature>
<feature type="binding site" evidence="1">
    <location>
        <position position="77"/>
    </location>
    <ligand>
        <name>(R)-5-diphosphomevalonate</name>
        <dbReference type="ChEBI" id="CHEBI:57557"/>
    </ligand>
</feature>
<feature type="binding site" evidence="1">
    <location>
        <begin position="156"/>
        <end position="161"/>
    </location>
    <ligand>
        <name>(R)-5-diphosphomevalonate</name>
        <dbReference type="ChEBI" id="CHEBI:57557"/>
    </ligand>
</feature>
<feature type="binding site" evidence="1">
    <location>
        <position position="212"/>
    </location>
    <ligand>
        <name>(R)-5-diphosphomevalonate</name>
        <dbReference type="ChEBI" id="CHEBI:57557"/>
    </ligand>
</feature>
<keyword id="KW-0067">ATP-binding</keyword>
<keyword id="KW-0963">Cytoplasm</keyword>
<keyword id="KW-0444">Lipid biosynthesis</keyword>
<keyword id="KW-0443">Lipid metabolism</keyword>
<keyword id="KW-0456">Lyase</keyword>
<keyword id="KW-0547">Nucleotide-binding</keyword>
<keyword id="KW-0539">Nucleus</keyword>
<keyword id="KW-1185">Reference proteome</keyword>
<keyword id="KW-0752">Steroid biosynthesis</keyword>
<keyword id="KW-0753">Steroid metabolism</keyword>
<keyword id="KW-0756">Sterol biosynthesis</keyword>
<keyword id="KW-1207">Sterol metabolism</keyword>
<evidence type="ECO:0000250" key="1">
    <source>
        <dbReference type="UniProtKB" id="O23722"/>
    </source>
</evidence>
<evidence type="ECO:0000250" key="2">
    <source>
        <dbReference type="UniProtKB" id="P32377"/>
    </source>
</evidence>
<evidence type="ECO:0000269" key="3">
    <source>
    </source>
</evidence>
<evidence type="ECO:0000305" key="4"/>
<dbReference type="EC" id="4.1.1.33" evidence="2"/>
<dbReference type="EMBL" id="CU329670">
    <property type="protein sequence ID" value="CAB11260.1"/>
    <property type="molecule type" value="Genomic_DNA"/>
</dbReference>
<dbReference type="PIR" id="T38344">
    <property type="entry name" value="T38344"/>
</dbReference>
<dbReference type="RefSeq" id="NP_594027.1">
    <property type="nucleotide sequence ID" value="NM_001019452.2"/>
</dbReference>
<dbReference type="SMR" id="O13963"/>
<dbReference type="FunCoup" id="O13963">
    <property type="interactions" value="436"/>
</dbReference>
<dbReference type="STRING" id="284812.O13963"/>
<dbReference type="iPTMnet" id="O13963"/>
<dbReference type="PaxDb" id="4896-SPAC24C9.03.1"/>
<dbReference type="EnsemblFungi" id="SPAC24C9.03.1">
    <property type="protein sequence ID" value="SPAC24C9.03.1:pep"/>
    <property type="gene ID" value="SPAC24C9.03"/>
</dbReference>
<dbReference type="GeneID" id="2541430"/>
<dbReference type="KEGG" id="spo:2541430"/>
<dbReference type="PomBase" id="SPAC24C9.03">
    <property type="gene designation" value="mvd1"/>
</dbReference>
<dbReference type="VEuPathDB" id="FungiDB:SPAC24C9.03"/>
<dbReference type="eggNOG" id="KOG2833">
    <property type="taxonomic scope" value="Eukaryota"/>
</dbReference>
<dbReference type="HOGENOM" id="CLU_040369_4_2_1"/>
<dbReference type="InParanoid" id="O13963"/>
<dbReference type="OMA" id="LTLHAMM"/>
<dbReference type="PhylomeDB" id="O13963"/>
<dbReference type="Reactome" id="R-SPO-191273">
    <property type="pathway name" value="Cholesterol biosynthesis"/>
</dbReference>
<dbReference type="Reactome" id="R-SPO-446199">
    <property type="pathway name" value="Synthesis of Dolichyl-phosphate"/>
</dbReference>
<dbReference type="UniPathway" id="UPA00057">
    <property type="reaction ID" value="UER00100"/>
</dbReference>
<dbReference type="PRO" id="PR:O13963"/>
<dbReference type="Proteomes" id="UP000002485">
    <property type="component" value="Chromosome I"/>
</dbReference>
<dbReference type="GO" id="GO:0005829">
    <property type="term" value="C:cytosol"/>
    <property type="evidence" value="ECO:0007005"/>
    <property type="project" value="PomBase"/>
</dbReference>
<dbReference type="GO" id="GO:0005634">
    <property type="term" value="C:nucleus"/>
    <property type="evidence" value="ECO:0007005"/>
    <property type="project" value="PomBase"/>
</dbReference>
<dbReference type="GO" id="GO:0005524">
    <property type="term" value="F:ATP binding"/>
    <property type="evidence" value="ECO:0007669"/>
    <property type="project" value="UniProtKB-KW"/>
</dbReference>
<dbReference type="GO" id="GO:0004163">
    <property type="term" value="F:diphosphomevalonate decarboxylase activity"/>
    <property type="evidence" value="ECO:0000318"/>
    <property type="project" value="GO_Central"/>
</dbReference>
<dbReference type="GO" id="GO:0010142">
    <property type="term" value="P:farnesyl diphosphate biosynthetic process, mevalonate pathway"/>
    <property type="evidence" value="ECO:0000305"/>
    <property type="project" value="PomBase"/>
</dbReference>
<dbReference type="GO" id="GO:0019287">
    <property type="term" value="P:isopentenyl diphosphate biosynthetic process, mevalonate pathway"/>
    <property type="evidence" value="ECO:0000318"/>
    <property type="project" value="GO_Central"/>
</dbReference>
<dbReference type="GO" id="GO:0016126">
    <property type="term" value="P:sterol biosynthetic process"/>
    <property type="evidence" value="ECO:0007669"/>
    <property type="project" value="UniProtKB-KW"/>
</dbReference>
<dbReference type="FunFam" id="3.30.230.10:FF:000018">
    <property type="entry name" value="Diphosphomevalonate decarboxylase"/>
    <property type="match status" value="1"/>
</dbReference>
<dbReference type="FunFam" id="3.30.70.890:FF:000005">
    <property type="entry name" value="Diphosphomevalonate decarboxylase"/>
    <property type="match status" value="1"/>
</dbReference>
<dbReference type="Gene3D" id="3.30.230.10">
    <property type="match status" value="1"/>
</dbReference>
<dbReference type="Gene3D" id="3.30.70.890">
    <property type="entry name" value="GHMP kinase, C-terminal domain"/>
    <property type="match status" value="1"/>
</dbReference>
<dbReference type="InterPro" id="IPR036554">
    <property type="entry name" value="GHMP_kinase_C_sf"/>
</dbReference>
<dbReference type="InterPro" id="IPR005935">
    <property type="entry name" value="Mev_decarb"/>
</dbReference>
<dbReference type="InterPro" id="IPR029765">
    <property type="entry name" value="Mev_diP_decarb"/>
</dbReference>
<dbReference type="InterPro" id="IPR053859">
    <property type="entry name" value="MVD-like_N"/>
</dbReference>
<dbReference type="InterPro" id="IPR041431">
    <property type="entry name" value="Mvd1_C"/>
</dbReference>
<dbReference type="InterPro" id="IPR020568">
    <property type="entry name" value="Ribosomal_Su5_D2-typ_SF"/>
</dbReference>
<dbReference type="InterPro" id="IPR014721">
    <property type="entry name" value="Ribsml_uS5_D2-typ_fold_subgr"/>
</dbReference>
<dbReference type="NCBIfam" id="TIGR01240">
    <property type="entry name" value="mevDPdecarb"/>
    <property type="match status" value="1"/>
</dbReference>
<dbReference type="PANTHER" id="PTHR10977">
    <property type="entry name" value="DIPHOSPHOMEVALONATE DECARBOXYLASE"/>
    <property type="match status" value="1"/>
</dbReference>
<dbReference type="PANTHER" id="PTHR10977:SF3">
    <property type="entry name" value="DIPHOSPHOMEVALONATE DECARBOXYLASE"/>
    <property type="match status" value="1"/>
</dbReference>
<dbReference type="Pfam" id="PF18376">
    <property type="entry name" value="MDD_C"/>
    <property type="match status" value="1"/>
</dbReference>
<dbReference type="Pfam" id="PF22700">
    <property type="entry name" value="MVD-like_N"/>
    <property type="match status" value="1"/>
</dbReference>
<dbReference type="PIRSF" id="PIRSF015950">
    <property type="entry name" value="Mev_P_decrbx"/>
    <property type="match status" value="1"/>
</dbReference>
<dbReference type="SUPFAM" id="SSF55060">
    <property type="entry name" value="GHMP Kinase, C-terminal domain"/>
    <property type="match status" value="1"/>
</dbReference>
<dbReference type="SUPFAM" id="SSF54211">
    <property type="entry name" value="Ribosomal protein S5 domain 2-like"/>
    <property type="match status" value="1"/>
</dbReference>
<name>MVD1_SCHPO</name>
<organism>
    <name type="scientific">Schizosaccharomyces pombe (strain 972 / ATCC 24843)</name>
    <name type="common">Fission yeast</name>
    <dbReference type="NCBI Taxonomy" id="284812"/>
    <lineage>
        <taxon>Eukaryota</taxon>
        <taxon>Fungi</taxon>
        <taxon>Dikarya</taxon>
        <taxon>Ascomycota</taxon>
        <taxon>Taphrinomycotina</taxon>
        <taxon>Schizosaccharomycetes</taxon>
        <taxon>Schizosaccharomycetales</taxon>
        <taxon>Schizosaccharomycetaceae</taxon>
        <taxon>Schizosaccharomyces</taxon>
    </lineage>
</organism>
<comment type="function">
    <text evidence="2 4">Diphosphomevalonate decarboxylase; part of the second module of ergosterol biosynthesis pathway that includes the middle steps of the pathway (By similarity). Mvd1 converts diphosphomevalonate into isopentenyl diphosphate (By similarity). The second module is carried out in the vacuole and involves the formation of farnesyl diphosphate, which is also an important intermediate in the biosynthesis of ubiquinone, dolichol, heme and prenylated proteins. Activity by the mevalonate kinase erg12 first converts mevalonate into 5-phosphomevalonate. 5-phosphomevalonate is then further converted to 5-diphosphomevalonate by the phosphomevalonate kinase erg8. The diphosphomevalonate decarboxylase mvd1 then produces isopentenyl diphosphate. The isopentenyl-diphosphate delta-isomerase idi1 then catalyzes the 1,3-allylic rearrangement of the homoallylic substrate isopentenyl (IPP) to its highly electrophilic allylic isomer, dimethylallyl diphosphate (DMAPP). Finally the farnesyl diphosphate synthase fps1 catalyzes the sequential condensation of isopentenyl pyrophosphate with dimethylallyl pyrophosphate, and then with the resultant geranylpyrophosphate to the ultimate product farnesyl pyrophosphate (Probable).</text>
</comment>
<comment type="catalytic activity">
    <reaction evidence="2">
        <text>(R)-5-diphosphomevalonate + ATP = isopentenyl diphosphate + ADP + phosphate + CO2</text>
        <dbReference type="Rhea" id="RHEA:23732"/>
        <dbReference type="ChEBI" id="CHEBI:16526"/>
        <dbReference type="ChEBI" id="CHEBI:30616"/>
        <dbReference type="ChEBI" id="CHEBI:43474"/>
        <dbReference type="ChEBI" id="CHEBI:57557"/>
        <dbReference type="ChEBI" id="CHEBI:128769"/>
        <dbReference type="ChEBI" id="CHEBI:456216"/>
        <dbReference type="EC" id="4.1.1.33"/>
    </reaction>
    <physiologicalReaction direction="left-to-right" evidence="2">
        <dbReference type="Rhea" id="RHEA:23733"/>
    </physiologicalReaction>
</comment>
<comment type="pathway">
    <text evidence="2">Isoprenoid biosynthesis; isopentenyl diphosphate biosynthesis via mevalonate pathway; isopentenyl diphosphate from (R)-mevalonate: step 3/3.</text>
</comment>
<comment type="subunit">
    <text evidence="2">Homodimer.</text>
</comment>
<comment type="subcellular location">
    <subcellularLocation>
        <location evidence="3">Cytoplasm</location>
    </subcellularLocation>
    <subcellularLocation>
        <location evidence="3">Nucleus</location>
    </subcellularLocation>
</comment>
<comment type="similarity">
    <text evidence="4">Belongs to the diphosphomevalonate decarboxylase family.</text>
</comment>